<reference key="1">
    <citation type="journal article" date="1996" name="J. Bacteriol.">
        <title>Deduced amino acid sequence, functional expression, and unique enzymatic properties of the form I and form II ribulose bisphosphate carboxylase/oxygenase from the chemoautotrophic bacterium Thiobacillus denitrificans.</title>
        <authorList>
            <person name="Hernandez J.M."/>
            <person name="Baker S.H."/>
            <person name="Lorbach S.C."/>
            <person name="Shively J.M."/>
            <person name="Tabita F.R."/>
        </authorList>
    </citation>
    <scope>NUCLEOTIDE SEQUENCE [GENOMIC DNA]</scope>
    <scope>KINETIC PARAMETERS</scope>
    <scope>FUNCTION</scope>
    <scope>SUBUNIT</scope>
</reference>
<reference key="2">
    <citation type="journal article" date="2006" name="J. Bacteriol.">
        <title>The genome sequence of the obligately chemolithoautotrophic, facultatively anaerobic bacterium Thiobacillus denitrificans.</title>
        <authorList>
            <person name="Beller H.R."/>
            <person name="Chain P.S."/>
            <person name="Letain T.E."/>
            <person name="Chakicherla A."/>
            <person name="Larimer F.W."/>
            <person name="Richardson P.M."/>
            <person name="Coleman M.A."/>
            <person name="Wood A.P."/>
            <person name="Kelly D.P."/>
        </authorList>
    </citation>
    <scope>NUCLEOTIDE SEQUENCE [LARGE SCALE GENOMIC DNA]</scope>
    <source>
        <strain>ATCC 25259 / T1</strain>
    </source>
</reference>
<keyword id="KW-0113">Calvin cycle</keyword>
<keyword id="KW-0120">Carbon dioxide fixation</keyword>
<keyword id="KW-0456">Lyase</keyword>
<keyword id="KW-0460">Magnesium</keyword>
<keyword id="KW-0479">Metal-binding</keyword>
<keyword id="KW-0503">Monooxygenase</keyword>
<keyword id="KW-0560">Oxidoreductase</keyword>
<keyword id="KW-1185">Reference proteome</keyword>
<protein>
    <recommendedName>
        <fullName evidence="1">Ribulose bisphosphate carboxylase large chain</fullName>
        <shortName evidence="1">RuBisCO large subunit</shortName>
        <ecNumber evidence="1">4.1.1.39</ecNumber>
    </recommendedName>
</protein>
<organism>
    <name type="scientific">Thiobacillus denitrificans (strain ATCC 25259 / T1)</name>
    <dbReference type="NCBI Taxonomy" id="292415"/>
    <lineage>
        <taxon>Bacteria</taxon>
        <taxon>Pseudomonadati</taxon>
        <taxon>Pseudomonadota</taxon>
        <taxon>Betaproteobacteria</taxon>
        <taxon>Nitrosomonadales</taxon>
        <taxon>Thiobacillaceae</taxon>
        <taxon>Thiobacillus</taxon>
    </lineage>
</organism>
<comment type="function">
    <text evidence="1 2">RuBisCO catalyzes two reactions: the carboxylation of D-ribulose 1,5-bisphosphate, the primary event in carbon dioxide fixation, as well as the oxidative fragmentation of the pentose substrate. Both reactions occur simultaneously and in competition at the same active site.</text>
</comment>
<comment type="catalytic activity">
    <reaction evidence="1">
        <text>2 (2R)-3-phosphoglycerate + 2 H(+) = D-ribulose 1,5-bisphosphate + CO2 + H2O</text>
        <dbReference type="Rhea" id="RHEA:23124"/>
        <dbReference type="ChEBI" id="CHEBI:15377"/>
        <dbReference type="ChEBI" id="CHEBI:15378"/>
        <dbReference type="ChEBI" id="CHEBI:16526"/>
        <dbReference type="ChEBI" id="CHEBI:57870"/>
        <dbReference type="ChEBI" id="CHEBI:58272"/>
        <dbReference type="EC" id="4.1.1.39"/>
    </reaction>
</comment>
<comment type="catalytic activity">
    <reaction evidence="1">
        <text>D-ribulose 1,5-bisphosphate + O2 = 2-phosphoglycolate + (2R)-3-phosphoglycerate + 2 H(+)</text>
        <dbReference type="Rhea" id="RHEA:36631"/>
        <dbReference type="ChEBI" id="CHEBI:15378"/>
        <dbReference type="ChEBI" id="CHEBI:15379"/>
        <dbReference type="ChEBI" id="CHEBI:57870"/>
        <dbReference type="ChEBI" id="CHEBI:58033"/>
        <dbReference type="ChEBI" id="CHEBI:58272"/>
    </reaction>
</comment>
<comment type="cofactor">
    <cofactor evidence="1">
        <name>Mg(2+)</name>
        <dbReference type="ChEBI" id="CHEBI:18420"/>
    </cofactor>
    <text evidence="1">Binds 1 Mg(2+) ion per subunit.</text>
</comment>
<comment type="biophysicochemical properties">
    <kinetics>
        <KM evidence="2">43 uM for ribulose 1,5-bisphosphate</KM>
        <KM evidence="2">138 uM for CO(2)</KM>
        <KM evidence="2">1637 uM for O(2)</KM>
        <Vmax evidence="2">1.8 umol/min/mg enzyme with CO(2) as substrate</Vmax>
        <Vmax evidence="2">0.5 umol/min/mg enzyme with O(2) as substrate</Vmax>
        <text>The CO(2)/O(2) specificity factor (tau) is 46.</text>
    </kinetics>
</comment>
<comment type="subunit">
    <text evidence="1 2">Heterohexadecamer of 8 large chains and 8 small chains (By similarity). In R.sphaeroides the complex is approximately 500 kDa.</text>
</comment>
<comment type="miscellaneous">
    <text evidence="1">The basic functional RuBisCO is composed of a large chain homodimer in a 'head-to-tail' conformation. In form I RuBisCO this homodimer is arranged in a barrel-like tetramer with the small subunits forming a tetrameric 'cap' on each end of the 'barrel'.</text>
</comment>
<comment type="similarity">
    <text evidence="1">Belongs to the RuBisCO large chain family. Type I subfamily.</text>
</comment>
<name>RBL1_THIDA</name>
<feature type="chain" id="PRO_0000062656" description="Ribulose bisphosphate carboxylase large chain">
    <location>
        <begin position="1"/>
        <end position="473"/>
    </location>
</feature>
<feature type="active site" description="Proton acceptor" evidence="1">
    <location>
        <position position="168"/>
    </location>
</feature>
<feature type="active site" description="Proton acceptor" evidence="1">
    <location>
        <position position="287"/>
    </location>
</feature>
<feature type="binding site" description="in homodimeric partner" evidence="1">
    <location>
        <position position="116"/>
    </location>
    <ligand>
        <name>substrate</name>
    </ligand>
</feature>
<feature type="binding site" evidence="1">
    <location>
        <position position="166"/>
    </location>
    <ligand>
        <name>substrate</name>
    </ligand>
</feature>
<feature type="binding site" evidence="1">
    <location>
        <position position="170"/>
    </location>
    <ligand>
        <name>substrate</name>
    </ligand>
</feature>
<feature type="binding site" description="via carbamate group" evidence="1">
    <location>
        <position position="194"/>
    </location>
    <ligand>
        <name>Mg(2+)</name>
        <dbReference type="ChEBI" id="CHEBI:18420"/>
    </ligand>
</feature>
<feature type="binding site" evidence="1">
    <location>
        <position position="196"/>
    </location>
    <ligand>
        <name>Mg(2+)</name>
        <dbReference type="ChEBI" id="CHEBI:18420"/>
    </ligand>
</feature>
<feature type="binding site" evidence="1">
    <location>
        <position position="197"/>
    </location>
    <ligand>
        <name>Mg(2+)</name>
        <dbReference type="ChEBI" id="CHEBI:18420"/>
    </ligand>
</feature>
<feature type="binding site" evidence="1">
    <location>
        <position position="288"/>
    </location>
    <ligand>
        <name>substrate</name>
    </ligand>
</feature>
<feature type="binding site" evidence="1">
    <location>
        <position position="320"/>
    </location>
    <ligand>
        <name>substrate</name>
    </ligand>
</feature>
<feature type="binding site" evidence="1">
    <location>
        <position position="372"/>
    </location>
    <ligand>
        <name>substrate</name>
    </ligand>
</feature>
<feature type="site" description="Transition state stabilizer" evidence="1">
    <location>
        <position position="327"/>
    </location>
</feature>
<feature type="modified residue" description="N6-carboxylysine" evidence="1">
    <location>
        <position position="194"/>
    </location>
</feature>
<accession>Q56259</accession>
<accession>Q3SFM9</accession>
<evidence type="ECO:0000255" key="1">
    <source>
        <dbReference type="HAMAP-Rule" id="MF_01338"/>
    </source>
</evidence>
<evidence type="ECO:0000269" key="2">
    <source>
    </source>
</evidence>
<dbReference type="EC" id="4.1.1.39" evidence="1"/>
<dbReference type="EMBL" id="L42940">
    <property type="protein sequence ID" value="AAB70697.1"/>
    <property type="molecule type" value="Genomic_DNA"/>
</dbReference>
<dbReference type="EMBL" id="CP000116">
    <property type="protein sequence ID" value="AAZ98577.1"/>
    <property type="molecule type" value="Genomic_DNA"/>
</dbReference>
<dbReference type="RefSeq" id="WP_011313136.1">
    <property type="nucleotide sequence ID" value="NC_007404.1"/>
</dbReference>
<dbReference type="SMR" id="Q56259"/>
<dbReference type="STRING" id="292415.Tbd_2624"/>
<dbReference type="KEGG" id="tbd:Tbd_2624"/>
<dbReference type="eggNOG" id="COG1850">
    <property type="taxonomic scope" value="Bacteria"/>
</dbReference>
<dbReference type="HOGENOM" id="CLU_031450_2_0_4"/>
<dbReference type="OrthoDB" id="9770811at2"/>
<dbReference type="Proteomes" id="UP000008291">
    <property type="component" value="Chromosome"/>
</dbReference>
<dbReference type="GO" id="GO:0000287">
    <property type="term" value="F:magnesium ion binding"/>
    <property type="evidence" value="ECO:0007669"/>
    <property type="project" value="UniProtKB-UniRule"/>
</dbReference>
<dbReference type="GO" id="GO:0004497">
    <property type="term" value="F:monooxygenase activity"/>
    <property type="evidence" value="ECO:0007669"/>
    <property type="project" value="UniProtKB-KW"/>
</dbReference>
<dbReference type="GO" id="GO:0016984">
    <property type="term" value="F:ribulose-bisphosphate carboxylase activity"/>
    <property type="evidence" value="ECO:0007669"/>
    <property type="project" value="UniProtKB-UniRule"/>
</dbReference>
<dbReference type="GO" id="GO:0019253">
    <property type="term" value="P:reductive pentose-phosphate cycle"/>
    <property type="evidence" value="ECO:0007669"/>
    <property type="project" value="UniProtKB-UniRule"/>
</dbReference>
<dbReference type="Gene3D" id="3.20.20.110">
    <property type="entry name" value="Ribulose bisphosphate carboxylase, large subunit, C-terminal domain"/>
    <property type="match status" value="1"/>
</dbReference>
<dbReference type="Gene3D" id="3.30.70.150">
    <property type="entry name" value="RuBisCO large subunit, N-terminal domain"/>
    <property type="match status" value="1"/>
</dbReference>
<dbReference type="HAMAP" id="MF_01338">
    <property type="entry name" value="RuBisCO_L_type1"/>
    <property type="match status" value="1"/>
</dbReference>
<dbReference type="InterPro" id="IPR033966">
    <property type="entry name" value="RuBisCO"/>
</dbReference>
<dbReference type="InterPro" id="IPR020878">
    <property type="entry name" value="RuBisCo_large_chain_AS"/>
</dbReference>
<dbReference type="InterPro" id="IPR000685">
    <property type="entry name" value="RuBisCO_lsu_C"/>
</dbReference>
<dbReference type="InterPro" id="IPR036376">
    <property type="entry name" value="RuBisCO_lsu_C_sf"/>
</dbReference>
<dbReference type="InterPro" id="IPR017443">
    <property type="entry name" value="RuBisCO_lsu_fd_N"/>
</dbReference>
<dbReference type="InterPro" id="IPR036422">
    <property type="entry name" value="RuBisCO_lsu_N_sf"/>
</dbReference>
<dbReference type="InterPro" id="IPR020888">
    <property type="entry name" value="RuBisCO_lsuI"/>
</dbReference>
<dbReference type="NCBIfam" id="NF003252">
    <property type="entry name" value="PRK04208.1"/>
    <property type="match status" value="1"/>
</dbReference>
<dbReference type="PANTHER" id="PTHR42704">
    <property type="entry name" value="RIBULOSE BISPHOSPHATE CARBOXYLASE"/>
    <property type="match status" value="1"/>
</dbReference>
<dbReference type="PANTHER" id="PTHR42704:SF17">
    <property type="entry name" value="RIBULOSE BISPHOSPHATE CARBOXYLASE LARGE CHAIN"/>
    <property type="match status" value="1"/>
</dbReference>
<dbReference type="Pfam" id="PF00016">
    <property type="entry name" value="RuBisCO_large"/>
    <property type="match status" value="1"/>
</dbReference>
<dbReference type="Pfam" id="PF02788">
    <property type="entry name" value="RuBisCO_large_N"/>
    <property type="match status" value="1"/>
</dbReference>
<dbReference type="SFLD" id="SFLDG01052">
    <property type="entry name" value="RuBisCO"/>
    <property type="match status" value="1"/>
</dbReference>
<dbReference type="SFLD" id="SFLDS00014">
    <property type="entry name" value="RuBisCO"/>
    <property type="match status" value="1"/>
</dbReference>
<dbReference type="SFLD" id="SFLDG00301">
    <property type="entry name" value="RuBisCO-like_proteins"/>
    <property type="match status" value="1"/>
</dbReference>
<dbReference type="SUPFAM" id="SSF51649">
    <property type="entry name" value="RuBisCo, C-terminal domain"/>
    <property type="match status" value="1"/>
</dbReference>
<dbReference type="SUPFAM" id="SSF54966">
    <property type="entry name" value="RuBisCO, large subunit, small (N-terminal) domain"/>
    <property type="match status" value="1"/>
</dbReference>
<dbReference type="PROSITE" id="PS00157">
    <property type="entry name" value="RUBISCO_LARGE"/>
    <property type="match status" value="1"/>
</dbReference>
<gene>
    <name evidence="1" type="primary">cbbL</name>
    <name type="synonym">cbbL1</name>
    <name type="ordered locus">Tbd_2624</name>
</gene>
<proteinExistence type="evidence at protein level"/>
<sequence>MAVKTYSAGVKEYRQTYWMPEYTPLDTDILACFKITPQAGVDREEAAAAVAAESSTGTWTTVWTDLLTDLDYYKGRAYAIEDVPGDDTCFYAFIAYPIDLFEEGSVVNVFTSLVGNVFGFKAVRALRLEDVRFPIAYVKTCGGPPHGIQVERDVMNKYGRPLLGCTIKPKLGLSAKNYGRAVYECLRGGLDFTKDDENVNSQPFMRWRQRFDFVMEAIQKSERETGERKGHYLNVTAPTPEEMYKRAEYAKEIGAPIIMHDYITGGFCANTGLANWCRDNGMLLHIHRAMHAVLDRNPHHGIHFRVLTKILRLSGGDHLHSGTVVGKLEGDREATLGWIDMMRDSFVKEDRSRGIFFDQDWGSMPGVFPVASGGIHVWHMPALVTIFGDDSVLQFGGGTLGHPWGNAAGAAANRVALEACVEARNKGVAIEKEGKTVLTEAAKNSPELKIAMETWKEIKFEFDTVDKLDVAHK</sequence>